<reference key="1">
    <citation type="journal article" date="1996" name="Genomics">
        <title>Characterization of msim, a murine homologue of the Drosophila sim transcription factor.</title>
        <authorList>
            <person name="Moffett P."/>
            <person name="Dayo M."/>
            <person name="Reece M."/>
            <person name="McCormack M.K."/>
            <person name="Pelletier J."/>
        </authorList>
    </citation>
    <scope>NUCLEOTIDE SEQUENCE [MRNA]</scope>
    <source>
        <tissue>Fetal kidney</tissue>
    </source>
</reference>
<reference key="2">
    <citation type="journal article" date="1996" name="Biochem. Biophys. Res. Commun.">
        <title>cDNA cloning of a murine homologue of Drosophila single-minded, its mRNA expression in mouse development, and chromosome localization.</title>
        <authorList>
            <person name="Ema M."/>
            <person name="Suzuki M."/>
            <person name="Morita M."/>
            <person name="Hirose K."/>
            <person name="Sogawa K."/>
            <person name="Matsuda Y."/>
            <person name="Gotoh O."/>
            <person name="Saijoh Y."/>
            <person name="Fujii H."/>
            <person name="Hamada H."/>
            <person name="Fujii-Kuriyama Y."/>
        </authorList>
    </citation>
    <scope>NUCLEOTIDE SEQUENCE [MRNA]</scope>
    <source>
        <strain>C57BL/6J</strain>
    </source>
</reference>
<reference key="3">
    <citation type="journal article" date="1996" name="Mol. Cell. Neurosci.">
        <title>Expression patterns of two murine homologs of Drosophila single-minded suggest possible roles in embryonic patterning and in the pathogenesis of Down syndrome.</title>
        <authorList>
            <person name="Fan C.-M."/>
            <person name="Kuwana E."/>
            <person name="Bulfone A."/>
            <person name="Fletcher C.F."/>
            <person name="Copeland N.G."/>
            <person name="Jenkins N.A."/>
            <person name="Crews S."/>
            <person name="Martinez S."/>
            <person name="Puelles L."/>
            <person name="Rubenstein J.L."/>
            <person name="Tessier-Lavigne M."/>
        </authorList>
    </citation>
    <scope>NUCLEOTIDE SEQUENCE [GENOMIC DNA / MRNA]</scope>
    <source>
        <strain>129/Sv</strain>
        <strain>Swiss Webster</strain>
        <tissue>Embryonic brain</tissue>
    </source>
</reference>
<reference key="4">
    <citation type="journal article" date="1996" name="Genomics">
        <title>The mammalian single-minded (SIM) gene: mouse cDNA structure and diencephalic expression indicate a candidate gene for Down syndrome.</title>
        <authorList>
            <person name="Yamaki A."/>
            <person name="Noda S."/>
            <person name="Kudoh J."/>
            <person name="Shindoh N."/>
            <person name="Maeda H."/>
            <person name="Minoshima S."/>
            <person name="Kawasaki K."/>
            <person name="Shimizu Y."/>
            <person name="Shimizu N."/>
        </authorList>
    </citation>
    <scope>NUCLEOTIDE SEQUENCE [MRNA]</scope>
    <source>
        <strain>ICR X Swiss Webster</strain>
        <tissue>Embryo</tissue>
    </source>
</reference>
<reference key="5">
    <citation type="journal article" date="1997" name="J. Biol. Chem.">
        <title>Two murine homologs of the Drosophila single-minded protein that interact with the mouse aryl hydrocarbon receptor nuclear translocator protein.</title>
        <authorList>
            <person name="Probst M.R."/>
            <person name="Fan C.-M."/>
            <person name="Tessier-Lavigne M."/>
            <person name="Hankinson O."/>
        </authorList>
    </citation>
    <scope>SUBUNIT</scope>
</reference>
<feature type="chain" id="PRO_0000127442" description="Single-minded homolog 2">
    <location>
        <begin position="1"/>
        <end position="657"/>
    </location>
</feature>
<feature type="domain" description="bHLH" evidence="4">
    <location>
        <begin position="1"/>
        <end position="53"/>
    </location>
</feature>
<feature type="domain" description="PAS 1" evidence="2">
    <location>
        <begin position="77"/>
        <end position="147"/>
    </location>
</feature>
<feature type="domain" description="PAC">
    <location>
        <begin position="218"/>
        <end position="288"/>
    </location>
</feature>
<feature type="domain" description="PAS 2" evidence="2">
    <location>
        <begin position="218"/>
        <end position="288"/>
    </location>
</feature>
<feature type="domain" description="Single-minded C-terminal" evidence="3">
    <location>
        <begin position="336"/>
        <end position="657"/>
    </location>
</feature>
<feature type="region of interest" description="Disordered" evidence="5">
    <location>
        <begin position="354"/>
        <end position="387"/>
    </location>
</feature>
<feature type="region of interest" description="Disordered" evidence="5">
    <location>
        <begin position="612"/>
        <end position="641"/>
    </location>
</feature>
<feature type="short sequence motif" description="Nuclear localization signal" evidence="1">
    <location>
        <begin position="367"/>
        <end position="386"/>
    </location>
</feature>
<feature type="compositionally biased region" description="Polar residues" evidence="5">
    <location>
        <begin position="354"/>
        <end position="364"/>
    </location>
</feature>
<feature type="compositionally biased region" description="Basic residues" evidence="5">
    <location>
        <begin position="369"/>
        <end position="381"/>
    </location>
</feature>
<feature type="sequence conflict" description="In Ref. 2; BAA09700 and 3; AAB84099." evidence="7" ref="2 3">
    <original>K</original>
    <variation>R</variation>
    <location>
        <position position="263"/>
    </location>
</feature>
<feature type="sequence conflict" description="In Ref. 3; AAA91202." evidence="7" ref="3">
    <original>E</original>
    <variation>G</variation>
    <location>
        <position position="336"/>
    </location>
</feature>
<feature type="sequence conflict" description="In Ref. 3; AAA91202." evidence="7" ref="3">
    <original>S</original>
    <variation>T</variation>
    <location>
        <position position="501"/>
    </location>
</feature>
<feature type="sequence conflict" description="In Ref. 3; AAB84099." evidence="7" ref="3">
    <original>S</original>
    <variation>P</variation>
    <location>
        <position position="512"/>
    </location>
</feature>
<feature type="sequence conflict" description="In Ref. 3; AAA91202." evidence="7" ref="3">
    <original>P</original>
    <variation>R</variation>
    <location>
        <position position="541"/>
    </location>
</feature>
<feature type="sequence conflict" description="In Ref. 3; AAA91202." evidence="7" ref="3">
    <original>APRQASRDAARLALARAPPECCAPP</original>
    <variation>VLARRPGRARCMWES</variation>
    <location>
        <begin position="561"/>
        <end position="585"/>
    </location>
</feature>
<feature type="sequence conflict" description="In Ref. 3; AAA91202." evidence="7" ref="3">
    <original>QA</original>
    <variation>HG</variation>
    <location>
        <begin position="590"/>
        <end position="591"/>
    </location>
</feature>
<feature type="sequence conflict" description="In Ref. 2; BAA09700 and 3; AAB84099." evidence="7" ref="2 3">
    <original>A</original>
    <variation>R</variation>
    <location>
        <position position="638"/>
    </location>
</feature>
<dbReference type="EMBL" id="U42554">
    <property type="protein sequence ID" value="AAB19098.1"/>
    <property type="molecule type" value="mRNA"/>
</dbReference>
<dbReference type="EMBL" id="D63383">
    <property type="protein sequence ID" value="BAA09700.1"/>
    <property type="molecule type" value="mRNA"/>
</dbReference>
<dbReference type="EMBL" id="U40576">
    <property type="protein sequence ID" value="AAA91202.1"/>
    <property type="status" value="ALT_FRAME"/>
    <property type="molecule type" value="mRNA"/>
</dbReference>
<dbReference type="EMBL" id="AF023873">
    <property type="protein sequence ID" value="AAB84099.1"/>
    <property type="molecule type" value="Genomic_DNA"/>
</dbReference>
<dbReference type="EMBL" id="AF023864">
    <property type="protein sequence ID" value="AAB84099.1"/>
    <property type="status" value="JOINED"/>
    <property type="molecule type" value="Genomic_DNA"/>
</dbReference>
<dbReference type="EMBL" id="AF023865">
    <property type="protein sequence ID" value="AAB84099.1"/>
    <property type="status" value="JOINED"/>
    <property type="molecule type" value="Genomic_DNA"/>
</dbReference>
<dbReference type="EMBL" id="AF023869">
    <property type="protein sequence ID" value="AAB84099.1"/>
    <property type="status" value="JOINED"/>
    <property type="molecule type" value="Genomic_DNA"/>
</dbReference>
<dbReference type="EMBL" id="AF023871">
    <property type="protein sequence ID" value="AAB84099.1"/>
    <property type="status" value="JOINED"/>
    <property type="molecule type" value="Genomic_DNA"/>
</dbReference>
<dbReference type="EMBL" id="AF023870">
    <property type="protein sequence ID" value="AAB84099.1"/>
    <property type="status" value="JOINED"/>
    <property type="molecule type" value="Genomic_DNA"/>
</dbReference>
<dbReference type="EMBL" id="AF023868">
    <property type="protein sequence ID" value="AAB84099.1"/>
    <property type="status" value="JOINED"/>
    <property type="molecule type" value="Genomic_DNA"/>
</dbReference>
<dbReference type="EMBL" id="AF023867">
    <property type="protein sequence ID" value="AAB84099.1"/>
    <property type="status" value="JOINED"/>
    <property type="molecule type" value="Genomic_DNA"/>
</dbReference>
<dbReference type="EMBL" id="AF023866">
    <property type="protein sequence ID" value="AAB84099.1"/>
    <property type="status" value="JOINED"/>
    <property type="molecule type" value="Genomic_DNA"/>
</dbReference>
<dbReference type="EMBL" id="AF023872">
    <property type="protein sequence ID" value="AAB84099.1"/>
    <property type="status" value="JOINED"/>
    <property type="molecule type" value="Genomic_DNA"/>
</dbReference>
<dbReference type="EMBL" id="D64135">
    <property type="protein sequence ID" value="BAA11013.1"/>
    <property type="molecule type" value="mRNA"/>
</dbReference>
<dbReference type="CCDS" id="CCDS37406.1"/>
<dbReference type="RefSeq" id="NP_035507.2">
    <property type="nucleotide sequence ID" value="NM_011377.2"/>
</dbReference>
<dbReference type="SMR" id="Q61079"/>
<dbReference type="BioGRID" id="203255">
    <property type="interactions" value="1"/>
</dbReference>
<dbReference type="CORUM" id="Q61079"/>
<dbReference type="FunCoup" id="Q61079">
    <property type="interactions" value="1782"/>
</dbReference>
<dbReference type="IntAct" id="Q61079">
    <property type="interactions" value="2"/>
</dbReference>
<dbReference type="STRING" id="10090.ENSMUSP00000072043"/>
<dbReference type="iPTMnet" id="Q61079"/>
<dbReference type="PhosphoSitePlus" id="Q61079"/>
<dbReference type="PaxDb" id="10090-ENSMUSP00000072043"/>
<dbReference type="ProteomicsDB" id="261236"/>
<dbReference type="Antibodypedia" id="23108">
    <property type="antibodies" value="166 antibodies from 29 providers"/>
</dbReference>
<dbReference type="DNASU" id="20465"/>
<dbReference type="Ensembl" id="ENSMUST00000072182.9">
    <property type="protein sequence ID" value="ENSMUSP00000072043.8"/>
    <property type="gene ID" value="ENSMUSG00000062713.9"/>
</dbReference>
<dbReference type="GeneID" id="20465"/>
<dbReference type="KEGG" id="mmu:20465"/>
<dbReference type="UCSC" id="uc008aae.1">
    <property type="organism name" value="mouse"/>
</dbReference>
<dbReference type="AGR" id="MGI:98307"/>
<dbReference type="CTD" id="6493"/>
<dbReference type="MGI" id="MGI:98307">
    <property type="gene designation" value="Sim2"/>
</dbReference>
<dbReference type="VEuPathDB" id="HostDB:ENSMUSG00000062713"/>
<dbReference type="eggNOG" id="KOG3559">
    <property type="taxonomic scope" value="Eukaryota"/>
</dbReference>
<dbReference type="GeneTree" id="ENSGT00940000159985"/>
<dbReference type="HOGENOM" id="CLU_010044_4_1_1"/>
<dbReference type="InParanoid" id="Q61079"/>
<dbReference type="OMA" id="WGQPSRL"/>
<dbReference type="OrthoDB" id="6021714at2759"/>
<dbReference type="PhylomeDB" id="Q61079"/>
<dbReference type="TreeFam" id="TF317772"/>
<dbReference type="BioGRID-ORCS" id="20465">
    <property type="hits" value="3 hits in 79 CRISPR screens"/>
</dbReference>
<dbReference type="ChiTaRS" id="Sim2">
    <property type="organism name" value="mouse"/>
</dbReference>
<dbReference type="PRO" id="PR:Q61079"/>
<dbReference type="Proteomes" id="UP000000589">
    <property type="component" value="Chromosome 16"/>
</dbReference>
<dbReference type="RNAct" id="Q61079">
    <property type="molecule type" value="protein"/>
</dbReference>
<dbReference type="Bgee" id="ENSMUSG00000062713">
    <property type="expression patterns" value="Expressed in esophagus and 95 other cell types or tissues"/>
</dbReference>
<dbReference type="ExpressionAtlas" id="Q61079">
    <property type="expression patterns" value="baseline and differential"/>
</dbReference>
<dbReference type="GO" id="GO:0016604">
    <property type="term" value="C:nuclear body"/>
    <property type="evidence" value="ECO:0007669"/>
    <property type="project" value="Ensembl"/>
</dbReference>
<dbReference type="GO" id="GO:0005634">
    <property type="term" value="C:nucleus"/>
    <property type="evidence" value="ECO:0000314"/>
    <property type="project" value="MGI"/>
</dbReference>
<dbReference type="GO" id="GO:0003677">
    <property type="term" value="F:DNA binding"/>
    <property type="evidence" value="ECO:0000314"/>
    <property type="project" value="MGI"/>
</dbReference>
<dbReference type="GO" id="GO:0003700">
    <property type="term" value="F:DNA-binding transcription factor activity"/>
    <property type="evidence" value="ECO:0007669"/>
    <property type="project" value="InterPro"/>
</dbReference>
<dbReference type="GO" id="GO:0046982">
    <property type="term" value="F:protein heterodimerization activity"/>
    <property type="evidence" value="ECO:0000353"/>
    <property type="project" value="UniProtKB"/>
</dbReference>
<dbReference type="GO" id="GO:0030154">
    <property type="term" value="P:cell differentiation"/>
    <property type="evidence" value="ECO:0007669"/>
    <property type="project" value="UniProtKB-KW"/>
</dbReference>
<dbReference type="GO" id="GO:0009880">
    <property type="term" value="P:embryonic pattern specification"/>
    <property type="evidence" value="ECO:0000315"/>
    <property type="project" value="MGI"/>
</dbReference>
<dbReference type="GO" id="GO:0030324">
    <property type="term" value="P:lung development"/>
    <property type="evidence" value="ECO:0000315"/>
    <property type="project" value="MGI"/>
</dbReference>
<dbReference type="GO" id="GO:0045892">
    <property type="term" value="P:negative regulation of DNA-templated transcription"/>
    <property type="evidence" value="ECO:0000314"/>
    <property type="project" value="MGI"/>
</dbReference>
<dbReference type="GO" id="GO:0000122">
    <property type="term" value="P:negative regulation of transcription by RNA polymerase II"/>
    <property type="evidence" value="ECO:0000316"/>
    <property type="project" value="MGI"/>
</dbReference>
<dbReference type="GO" id="GO:0007399">
    <property type="term" value="P:nervous system development"/>
    <property type="evidence" value="ECO:0007669"/>
    <property type="project" value="UniProtKB-KW"/>
</dbReference>
<dbReference type="CDD" id="cd00130">
    <property type="entry name" value="PAS"/>
    <property type="match status" value="2"/>
</dbReference>
<dbReference type="FunFam" id="3.30.450.20:FF:000017">
    <property type="entry name" value="SIM bHLH transcription factor 2"/>
    <property type="match status" value="1"/>
</dbReference>
<dbReference type="FunFam" id="3.30.450.20:FF:000047">
    <property type="entry name" value="SIM bHLH transcription factor 2"/>
    <property type="match status" value="1"/>
</dbReference>
<dbReference type="FunFam" id="4.10.280.10:FF:000007">
    <property type="entry name" value="single-minded homolog 1 isoform X1"/>
    <property type="match status" value="1"/>
</dbReference>
<dbReference type="Gene3D" id="4.10.280.10">
    <property type="entry name" value="Helix-loop-helix DNA-binding domain"/>
    <property type="match status" value="1"/>
</dbReference>
<dbReference type="Gene3D" id="3.30.450.20">
    <property type="entry name" value="PAS domain"/>
    <property type="match status" value="2"/>
</dbReference>
<dbReference type="InterPro" id="IPR011598">
    <property type="entry name" value="bHLH_dom"/>
</dbReference>
<dbReference type="InterPro" id="IPR036638">
    <property type="entry name" value="HLH_DNA-bd_sf"/>
</dbReference>
<dbReference type="InterPro" id="IPR001610">
    <property type="entry name" value="PAC"/>
</dbReference>
<dbReference type="InterPro" id="IPR000014">
    <property type="entry name" value="PAS"/>
</dbReference>
<dbReference type="InterPro" id="IPR035965">
    <property type="entry name" value="PAS-like_dom_sf"/>
</dbReference>
<dbReference type="InterPro" id="IPR013767">
    <property type="entry name" value="PAS_fold"/>
</dbReference>
<dbReference type="InterPro" id="IPR013655">
    <property type="entry name" value="PAS_fold_3"/>
</dbReference>
<dbReference type="InterPro" id="IPR010578">
    <property type="entry name" value="SIM_C"/>
</dbReference>
<dbReference type="PANTHER" id="PTHR23043">
    <property type="entry name" value="HYPOXIA-INDUCIBLE FACTOR 1 ALPHA"/>
    <property type="match status" value="1"/>
</dbReference>
<dbReference type="PANTHER" id="PTHR23043:SF19">
    <property type="entry name" value="SINGLE-MINDED HOMOLOG 2"/>
    <property type="match status" value="1"/>
</dbReference>
<dbReference type="Pfam" id="PF23171">
    <property type="entry name" value="bHLH_HIF1A"/>
    <property type="match status" value="1"/>
</dbReference>
<dbReference type="Pfam" id="PF00989">
    <property type="entry name" value="PAS"/>
    <property type="match status" value="1"/>
</dbReference>
<dbReference type="Pfam" id="PF08447">
    <property type="entry name" value="PAS_3"/>
    <property type="match status" value="1"/>
</dbReference>
<dbReference type="Pfam" id="PF06621">
    <property type="entry name" value="SIM_C"/>
    <property type="match status" value="1"/>
</dbReference>
<dbReference type="SMART" id="SM00353">
    <property type="entry name" value="HLH"/>
    <property type="match status" value="1"/>
</dbReference>
<dbReference type="SMART" id="SM00086">
    <property type="entry name" value="PAC"/>
    <property type="match status" value="1"/>
</dbReference>
<dbReference type="SMART" id="SM00091">
    <property type="entry name" value="PAS"/>
    <property type="match status" value="2"/>
</dbReference>
<dbReference type="SUPFAM" id="SSF47459">
    <property type="entry name" value="HLH, helix-loop-helix DNA-binding domain"/>
    <property type="match status" value="1"/>
</dbReference>
<dbReference type="SUPFAM" id="SSF55785">
    <property type="entry name" value="PYP-like sensor domain (PAS domain)"/>
    <property type="match status" value="2"/>
</dbReference>
<dbReference type="PROSITE" id="PS50888">
    <property type="entry name" value="BHLH"/>
    <property type="match status" value="1"/>
</dbReference>
<dbReference type="PROSITE" id="PS50112">
    <property type="entry name" value="PAS"/>
    <property type="match status" value="2"/>
</dbReference>
<dbReference type="PROSITE" id="PS51302">
    <property type="entry name" value="SIM_C"/>
    <property type="match status" value="1"/>
</dbReference>
<keyword id="KW-0217">Developmental protein</keyword>
<keyword id="KW-0221">Differentiation</keyword>
<keyword id="KW-0238">DNA-binding</keyword>
<keyword id="KW-0524">Neurogenesis</keyword>
<keyword id="KW-0539">Nucleus</keyword>
<keyword id="KW-1185">Reference proteome</keyword>
<keyword id="KW-0677">Repeat</keyword>
<keyword id="KW-0804">Transcription</keyword>
<keyword id="KW-0805">Transcription regulation</keyword>
<accession>Q61079</accession>
<accession>O35391</accession>
<accession>Q61046</accession>
<accession>Q61904</accession>
<proteinExistence type="evidence at protein level"/>
<name>SIM2_MOUSE</name>
<sequence length="657" mass="72513">MKEKSKNAAKTRREKENGEFYELAKLLPLPSAITSQLDKASIIRLTTSYLKMRAVFPEGLGDAWGQPSRTGPLDSVAKELGSHLLQTLDGFVFVVASDGKIMYISETASVHLGLSQVELTGNSIYEYIHPSDHDEMTAVLTAHPPLHHHLLQEYEIERSFFLRMKCVLAKRNAGLTCSGYKVIHCSGYLKIRQYMLDMSLYDSCYQIVGLVAVGQSLPPSAITEIKLHSNMFMFRASLDLKLIFLDSRVTELTGYEPQDLIEKTLYHHVHGCDTFHLRYAHHLLLVKGQVTTKYYRLLSKLGGWVWVQSYATVVHNSRSSRPHCIVSVNYVLTDVEYKELQLSLDQVSTSKSQESWRTTLSTSQETRKSAKPKNTKMKTKLRTNPYPPQQYSSFQMDKLECSQVGNWRTSPPTNAVAPPEQQLHSEASDLLYGPPYSLPFSYHYGHFPLDSHVFSSKKPGLPAKFGQPQGSPCEVARFFLSTLPASSECQWHCANSLVPSSSSPAKNLSEPSPVNAARHGLVPNYEAPSAAARRFCEDPAPPSFPSCGHYREEPALGPAKAPRQASRDAARLALARAPPECCAPPAPEPQAPAQLPFVLLNYHRVLARRGPLGSAAPGAPEAAGSLRPRHPGPVAASAPGAPRPHYLGASVIITNGR</sequence>
<evidence type="ECO:0000250" key="1"/>
<evidence type="ECO:0000255" key="2">
    <source>
        <dbReference type="PROSITE-ProRule" id="PRU00140"/>
    </source>
</evidence>
<evidence type="ECO:0000255" key="3">
    <source>
        <dbReference type="PROSITE-ProRule" id="PRU00632"/>
    </source>
</evidence>
<evidence type="ECO:0000255" key="4">
    <source>
        <dbReference type="PROSITE-ProRule" id="PRU00981"/>
    </source>
</evidence>
<evidence type="ECO:0000256" key="5">
    <source>
        <dbReference type="SAM" id="MobiDB-lite"/>
    </source>
</evidence>
<evidence type="ECO:0000269" key="6">
    <source>
    </source>
</evidence>
<evidence type="ECO:0000305" key="7"/>
<gene>
    <name type="primary">Sim2</name>
</gene>
<organism>
    <name type="scientific">Mus musculus</name>
    <name type="common">Mouse</name>
    <dbReference type="NCBI Taxonomy" id="10090"/>
    <lineage>
        <taxon>Eukaryota</taxon>
        <taxon>Metazoa</taxon>
        <taxon>Chordata</taxon>
        <taxon>Craniata</taxon>
        <taxon>Vertebrata</taxon>
        <taxon>Euteleostomi</taxon>
        <taxon>Mammalia</taxon>
        <taxon>Eutheria</taxon>
        <taxon>Euarchontoglires</taxon>
        <taxon>Glires</taxon>
        <taxon>Rodentia</taxon>
        <taxon>Myomorpha</taxon>
        <taxon>Muroidea</taxon>
        <taxon>Muridae</taxon>
        <taxon>Murinae</taxon>
        <taxon>Mus</taxon>
        <taxon>Mus</taxon>
    </lineage>
</organism>
<comment type="function">
    <text>Transcription factor that may be a master gene of CNS development in cooperation with Arnt. It may have pleiotropic effects in the tissues expressed during development.</text>
</comment>
<comment type="subunit">
    <text evidence="6">Efficient DNA binding requires dimerization with another bHLH protein. Heterodimer of SIM2 and ARNT.</text>
</comment>
<comment type="subcellular location">
    <subcellularLocation>
        <location evidence="3 4">Nucleus</location>
    </subcellularLocation>
</comment>
<comment type="tissue specificity">
    <text>Transcripts were detected in high levels in kidney followed by skeletal muscle and lung. Low levels were found in testis, brain and heart. In early fetal development it is found in CNS, developing kidney, tongue epithelium and cartilage primordia.</text>
</comment>
<comment type="sequence caution" evidence="7">
    <conflict type="frameshift">
        <sequence resource="EMBL-CDS" id="AAA91202"/>
    </conflict>
</comment>
<protein>
    <recommendedName>
        <fullName>Single-minded homolog 2</fullName>
    </recommendedName>
    <alternativeName>
        <fullName>SIM transcription factor</fullName>
        <shortName>mSIM</shortName>
    </alternativeName>
</protein>